<feature type="chain" id="PRO_0000145811" description="Biopolymer transport protein ExbB">
    <location>
        <begin position="1"/>
        <end position="244"/>
    </location>
</feature>
<feature type="topological domain" description="Periplasmic" evidence="2">
    <location>
        <begin position="1"/>
        <end position="20"/>
    </location>
</feature>
<feature type="transmembrane region" description="Helical" evidence="2">
    <location>
        <begin position="21"/>
        <end position="41"/>
    </location>
</feature>
<feature type="topological domain" description="Cytoplasmic" evidence="2">
    <location>
        <begin position="42"/>
        <end position="132"/>
    </location>
</feature>
<feature type="transmembrane region" description="Helical" evidence="2">
    <location>
        <begin position="133"/>
        <end position="153"/>
    </location>
</feature>
<feature type="topological domain" description="Periplasmic" evidence="2">
    <location>
        <begin position="154"/>
        <end position="177"/>
    </location>
</feature>
<feature type="transmembrane region" description="Helical" evidence="2">
    <location>
        <begin position="178"/>
        <end position="198"/>
    </location>
</feature>
<feature type="topological domain" description="Cytoplasmic" evidence="2">
    <location>
        <begin position="199"/>
        <end position="244"/>
    </location>
</feature>
<accession>P0A1H8</accession>
<accession>P18950</accession>
<name>EXBB_SALTI</name>
<gene>
    <name type="primary">exbB</name>
    <name type="ordered locus">STY3332</name>
    <name type="ordered locus">t3079</name>
</gene>
<protein>
    <recommendedName>
        <fullName>Biopolymer transport protein ExbB</fullName>
    </recommendedName>
</protein>
<comment type="function">
    <text evidence="1">Involved in the TonB-dependent energy-dependent transport of various receptor-bound substrates. Protects ExbD from proteolytic degradation and functionally stabilizes TonB (By similarity).</text>
</comment>
<comment type="subunit">
    <text evidence="1">The accessory proteins ExbB and ExbD seem to form a complex with TonB.</text>
</comment>
<comment type="subcellular location">
    <subcellularLocation>
        <location evidence="1">Cell inner membrane</location>
        <topology evidence="1">Multi-pass membrane protein</topology>
    </subcellularLocation>
</comment>
<comment type="similarity">
    <text evidence="3">Belongs to the ExbB/TolQ family.</text>
</comment>
<sequence>MGNNLMQTDLSVWGMYQHADIVVKCVMIGLILASVVTWAIFFSKSVEFFTQKRRLKREQLQLADARSLDQASDIAAGFSAKSLSAQLINEAQNELELSQGSEDNEGIKERTGFRLERRVAAVGRYMGRGNGYLATIGAISPFVGLFGTVWGIMNSFIGIAQTQTTNLAVVAPGIAEALLATAIGLVAAIPAVVIYNIFARQIGSYKATLGDVAAQVLLLQSRDLDLNASASAQPVRAAQKLRVG</sequence>
<reference key="1">
    <citation type="journal article" date="2001" name="Nature">
        <title>Complete genome sequence of a multiple drug resistant Salmonella enterica serovar Typhi CT18.</title>
        <authorList>
            <person name="Parkhill J."/>
            <person name="Dougan G."/>
            <person name="James K.D."/>
            <person name="Thomson N.R."/>
            <person name="Pickard D."/>
            <person name="Wain J."/>
            <person name="Churcher C.M."/>
            <person name="Mungall K.L."/>
            <person name="Bentley S.D."/>
            <person name="Holden M.T.G."/>
            <person name="Sebaihia M."/>
            <person name="Baker S."/>
            <person name="Basham D."/>
            <person name="Brooks K."/>
            <person name="Chillingworth T."/>
            <person name="Connerton P."/>
            <person name="Cronin A."/>
            <person name="Davis P."/>
            <person name="Davies R.M."/>
            <person name="Dowd L."/>
            <person name="White N."/>
            <person name="Farrar J."/>
            <person name="Feltwell T."/>
            <person name="Hamlin N."/>
            <person name="Haque A."/>
            <person name="Hien T.T."/>
            <person name="Holroyd S."/>
            <person name="Jagels K."/>
            <person name="Krogh A."/>
            <person name="Larsen T.S."/>
            <person name="Leather S."/>
            <person name="Moule S."/>
            <person name="O'Gaora P."/>
            <person name="Parry C."/>
            <person name="Quail M.A."/>
            <person name="Rutherford K.M."/>
            <person name="Simmonds M."/>
            <person name="Skelton J."/>
            <person name="Stevens K."/>
            <person name="Whitehead S."/>
            <person name="Barrell B.G."/>
        </authorList>
    </citation>
    <scope>NUCLEOTIDE SEQUENCE [LARGE SCALE GENOMIC DNA]</scope>
    <source>
        <strain>CT18</strain>
    </source>
</reference>
<reference key="2">
    <citation type="journal article" date="2003" name="J. Bacteriol.">
        <title>Comparative genomics of Salmonella enterica serovar Typhi strains Ty2 and CT18.</title>
        <authorList>
            <person name="Deng W."/>
            <person name="Liou S.-R."/>
            <person name="Plunkett G. III"/>
            <person name="Mayhew G.F."/>
            <person name="Rose D.J."/>
            <person name="Burland V."/>
            <person name="Kodoyianni V."/>
            <person name="Schwartz D.C."/>
            <person name="Blattner F.R."/>
        </authorList>
    </citation>
    <scope>NUCLEOTIDE SEQUENCE [LARGE SCALE GENOMIC DNA]</scope>
    <source>
        <strain>ATCC 700931 / Ty2</strain>
    </source>
</reference>
<organism>
    <name type="scientific">Salmonella typhi</name>
    <dbReference type="NCBI Taxonomy" id="90370"/>
    <lineage>
        <taxon>Bacteria</taxon>
        <taxon>Pseudomonadati</taxon>
        <taxon>Pseudomonadota</taxon>
        <taxon>Gammaproteobacteria</taxon>
        <taxon>Enterobacterales</taxon>
        <taxon>Enterobacteriaceae</taxon>
        <taxon>Salmonella</taxon>
    </lineage>
</organism>
<evidence type="ECO:0000250" key="1"/>
<evidence type="ECO:0000255" key="2"/>
<evidence type="ECO:0000305" key="3"/>
<proteinExistence type="inferred from homology"/>
<dbReference type="EMBL" id="AL513382">
    <property type="protein sequence ID" value="CAD02990.1"/>
    <property type="molecule type" value="Genomic_DNA"/>
</dbReference>
<dbReference type="EMBL" id="AE014613">
    <property type="protein sequence ID" value="AAO70624.1"/>
    <property type="molecule type" value="Genomic_DNA"/>
</dbReference>
<dbReference type="RefSeq" id="NP_457552.1">
    <property type="nucleotide sequence ID" value="NC_003198.1"/>
</dbReference>
<dbReference type="RefSeq" id="WP_000527859.1">
    <property type="nucleotide sequence ID" value="NZ_WSUR01000003.1"/>
</dbReference>
<dbReference type="SMR" id="P0A1H8"/>
<dbReference type="STRING" id="220341.gene:17587193"/>
<dbReference type="KEGG" id="stt:t3079"/>
<dbReference type="KEGG" id="sty:STY3332"/>
<dbReference type="PATRIC" id="fig|220341.7.peg.3392"/>
<dbReference type="eggNOG" id="COG0811">
    <property type="taxonomic scope" value="Bacteria"/>
</dbReference>
<dbReference type="HOGENOM" id="CLU_053325_0_2_6"/>
<dbReference type="OMA" id="PHMVKVG"/>
<dbReference type="OrthoDB" id="9805133at2"/>
<dbReference type="Proteomes" id="UP000000541">
    <property type="component" value="Chromosome"/>
</dbReference>
<dbReference type="Proteomes" id="UP000002670">
    <property type="component" value="Chromosome"/>
</dbReference>
<dbReference type="GO" id="GO:0005886">
    <property type="term" value="C:plasma membrane"/>
    <property type="evidence" value="ECO:0007669"/>
    <property type="project" value="UniProtKB-SubCell"/>
</dbReference>
<dbReference type="GO" id="GO:0022857">
    <property type="term" value="F:transmembrane transporter activity"/>
    <property type="evidence" value="ECO:0007669"/>
    <property type="project" value="InterPro"/>
</dbReference>
<dbReference type="GO" id="GO:0043213">
    <property type="term" value="P:bacteriocin transport"/>
    <property type="evidence" value="ECO:0007669"/>
    <property type="project" value="UniProtKB-KW"/>
</dbReference>
<dbReference type="GO" id="GO:0017038">
    <property type="term" value="P:protein import"/>
    <property type="evidence" value="ECO:0007669"/>
    <property type="project" value="TreeGrafter"/>
</dbReference>
<dbReference type="InterPro" id="IPR050790">
    <property type="entry name" value="ExbB/TolQ_transport"/>
</dbReference>
<dbReference type="InterPro" id="IPR002898">
    <property type="entry name" value="MotA_ExbB_proton_chnl"/>
</dbReference>
<dbReference type="InterPro" id="IPR014164">
    <property type="entry name" value="TonB_ExbB_1"/>
</dbReference>
<dbReference type="NCBIfam" id="TIGR02797">
    <property type="entry name" value="exbB"/>
    <property type="match status" value="1"/>
</dbReference>
<dbReference type="NCBIfam" id="NF007722">
    <property type="entry name" value="PRK10414.1"/>
    <property type="match status" value="1"/>
</dbReference>
<dbReference type="PANTHER" id="PTHR30625:SF16">
    <property type="entry name" value="BIOPOLYMER TRANSPORT PROTEIN EXBB"/>
    <property type="match status" value="1"/>
</dbReference>
<dbReference type="PANTHER" id="PTHR30625">
    <property type="entry name" value="PROTEIN TOLQ"/>
    <property type="match status" value="1"/>
</dbReference>
<dbReference type="Pfam" id="PF01618">
    <property type="entry name" value="MotA_ExbB"/>
    <property type="match status" value="1"/>
</dbReference>
<keyword id="KW-0080">Bacteriocin transport</keyword>
<keyword id="KW-0997">Cell inner membrane</keyword>
<keyword id="KW-1003">Cell membrane</keyword>
<keyword id="KW-0472">Membrane</keyword>
<keyword id="KW-0653">Protein transport</keyword>
<keyword id="KW-0812">Transmembrane</keyword>
<keyword id="KW-1133">Transmembrane helix</keyword>
<keyword id="KW-0813">Transport</keyword>